<keyword id="KW-0067">ATP-binding</keyword>
<keyword id="KW-0143">Chaperone</keyword>
<keyword id="KW-0963">Cytoplasm</keyword>
<keyword id="KW-0413">Isomerase</keyword>
<keyword id="KW-0547">Nucleotide-binding</keyword>
<proteinExistence type="inferred from homology"/>
<reference key="1">
    <citation type="journal article" date="2008" name="Genome Res.">
        <title>Genome sequence of the beta-rhizobium Cupriavidus taiwanensis and comparative genomics of rhizobia.</title>
        <authorList>
            <person name="Amadou C."/>
            <person name="Pascal G."/>
            <person name="Mangenot S."/>
            <person name="Glew M."/>
            <person name="Bontemps C."/>
            <person name="Capela D."/>
            <person name="Carrere S."/>
            <person name="Cruveiller S."/>
            <person name="Dossat C."/>
            <person name="Lajus A."/>
            <person name="Marchetti M."/>
            <person name="Poinsot V."/>
            <person name="Rouy Z."/>
            <person name="Servin B."/>
            <person name="Saad M."/>
            <person name="Schenowitz C."/>
            <person name="Barbe V."/>
            <person name="Batut J."/>
            <person name="Medigue C."/>
            <person name="Masson-Boivin C."/>
        </authorList>
    </citation>
    <scope>NUCLEOTIDE SEQUENCE [LARGE SCALE GENOMIC DNA]</scope>
    <source>
        <strain>DSM 17343 / BCRC 17206 / CCUG 44338 / CIP 107171 / LMG 19424 / R1</strain>
    </source>
</reference>
<protein>
    <recommendedName>
        <fullName evidence="1">Chaperonin GroEL</fullName>
        <ecNumber evidence="1">5.6.1.7</ecNumber>
    </recommendedName>
    <alternativeName>
        <fullName evidence="1">60 kDa chaperonin</fullName>
    </alternativeName>
    <alternativeName>
        <fullName evidence="1">Chaperonin-60</fullName>
        <shortName evidence="1">Cpn60</shortName>
    </alternativeName>
</protein>
<comment type="function">
    <text evidence="1">Together with its co-chaperonin GroES, plays an essential role in assisting protein folding. The GroEL-GroES system forms a nano-cage that allows encapsulation of the non-native substrate proteins and provides a physical environment optimized to promote and accelerate protein folding.</text>
</comment>
<comment type="catalytic activity">
    <reaction evidence="1">
        <text>ATP + H2O + a folded polypeptide = ADP + phosphate + an unfolded polypeptide.</text>
        <dbReference type="EC" id="5.6.1.7"/>
    </reaction>
</comment>
<comment type="subunit">
    <text evidence="1">Forms a cylinder of 14 subunits composed of two heptameric rings stacked back-to-back. Interacts with the co-chaperonin GroES.</text>
</comment>
<comment type="subcellular location">
    <subcellularLocation>
        <location evidence="1">Cytoplasm</location>
    </subcellularLocation>
</comment>
<comment type="similarity">
    <text evidence="1">Belongs to the chaperonin (HSP60) family.</text>
</comment>
<dbReference type="EC" id="5.6.1.7" evidence="1"/>
<dbReference type="EMBL" id="CU633749">
    <property type="protein sequence ID" value="CAQ68664.1"/>
    <property type="molecule type" value="Genomic_DNA"/>
</dbReference>
<dbReference type="RefSeq" id="WP_012352004.1">
    <property type="nucleotide sequence ID" value="NC_010528.1"/>
</dbReference>
<dbReference type="SMR" id="B3R2Y3"/>
<dbReference type="GeneID" id="29761147"/>
<dbReference type="KEGG" id="cti:RALTA_A0686"/>
<dbReference type="eggNOG" id="COG0459">
    <property type="taxonomic scope" value="Bacteria"/>
</dbReference>
<dbReference type="HOGENOM" id="CLU_016503_3_0_4"/>
<dbReference type="BioCyc" id="CTAI977880:RALTA_RS03330-MONOMER"/>
<dbReference type="Proteomes" id="UP000001692">
    <property type="component" value="Chromosome 1"/>
</dbReference>
<dbReference type="GO" id="GO:0005737">
    <property type="term" value="C:cytoplasm"/>
    <property type="evidence" value="ECO:0007669"/>
    <property type="project" value="UniProtKB-SubCell"/>
</dbReference>
<dbReference type="GO" id="GO:0005524">
    <property type="term" value="F:ATP binding"/>
    <property type="evidence" value="ECO:0007669"/>
    <property type="project" value="UniProtKB-UniRule"/>
</dbReference>
<dbReference type="GO" id="GO:0140662">
    <property type="term" value="F:ATP-dependent protein folding chaperone"/>
    <property type="evidence" value="ECO:0007669"/>
    <property type="project" value="InterPro"/>
</dbReference>
<dbReference type="GO" id="GO:0016853">
    <property type="term" value="F:isomerase activity"/>
    <property type="evidence" value="ECO:0007669"/>
    <property type="project" value="UniProtKB-KW"/>
</dbReference>
<dbReference type="GO" id="GO:0051082">
    <property type="term" value="F:unfolded protein binding"/>
    <property type="evidence" value="ECO:0007669"/>
    <property type="project" value="UniProtKB-UniRule"/>
</dbReference>
<dbReference type="GO" id="GO:0042026">
    <property type="term" value="P:protein refolding"/>
    <property type="evidence" value="ECO:0007669"/>
    <property type="project" value="UniProtKB-UniRule"/>
</dbReference>
<dbReference type="CDD" id="cd03344">
    <property type="entry name" value="GroEL"/>
    <property type="match status" value="1"/>
</dbReference>
<dbReference type="FunFam" id="1.10.560.10:FF:000001">
    <property type="entry name" value="60 kDa chaperonin"/>
    <property type="match status" value="1"/>
</dbReference>
<dbReference type="FunFam" id="3.50.7.10:FF:000001">
    <property type="entry name" value="60 kDa chaperonin"/>
    <property type="match status" value="1"/>
</dbReference>
<dbReference type="Gene3D" id="3.50.7.10">
    <property type="entry name" value="GroEL"/>
    <property type="match status" value="1"/>
</dbReference>
<dbReference type="Gene3D" id="1.10.560.10">
    <property type="entry name" value="GroEL-like equatorial domain"/>
    <property type="match status" value="1"/>
</dbReference>
<dbReference type="Gene3D" id="3.30.260.10">
    <property type="entry name" value="TCP-1-like chaperonin intermediate domain"/>
    <property type="match status" value="1"/>
</dbReference>
<dbReference type="HAMAP" id="MF_00600">
    <property type="entry name" value="CH60"/>
    <property type="match status" value="1"/>
</dbReference>
<dbReference type="InterPro" id="IPR018370">
    <property type="entry name" value="Chaperonin_Cpn60_CS"/>
</dbReference>
<dbReference type="InterPro" id="IPR001844">
    <property type="entry name" value="Cpn60/GroEL"/>
</dbReference>
<dbReference type="InterPro" id="IPR002423">
    <property type="entry name" value="Cpn60/GroEL/TCP-1"/>
</dbReference>
<dbReference type="InterPro" id="IPR027409">
    <property type="entry name" value="GroEL-like_apical_dom_sf"/>
</dbReference>
<dbReference type="InterPro" id="IPR027413">
    <property type="entry name" value="GROEL-like_equatorial_sf"/>
</dbReference>
<dbReference type="InterPro" id="IPR027410">
    <property type="entry name" value="TCP-1-like_intermed_sf"/>
</dbReference>
<dbReference type="NCBIfam" id="TIGR02348">
    <property type="entry name" value="GroEL"/>
    <property type="match status" value="1"/>
</dbReference>
<dbReference type="NCBIfam" id="NF000592">
    <property type="entry name" value="PRK00013.1"/>
    <property type="match status" value="1"/>
</dbReference>
<dbReference type="NCBIfam" id="NF009487">
    <property type="entry name" value="PRK12849.1"/>
    <property type="match status" value="1"/>
</dbReference>
<dbReference type="NCBIfam" id="NF009488">
    <property type="entry name" value="PRK12850.1"/>
    <property type="match status" value="1"/>
</dbReference>
<dbReference type="NCBIfam" id="NF009489">
    <property type="entry name" value="PRK12851.1"/>
    <property type="match status" value="1"/>
</dbReference>
<dbReference type="PANTHER" id="PTHR45633">
    <property type="entry name" value="60 KDA HEAT SHOCK PROTEIN, MITOCHONDRIAL"/>
    <property type="match status" value="1"/>
</dbReference>
<dbReference type="Pfam" id="PF00118">
    <property type="entry name" value="Cpn60_TCP1"/>
    <property type="match status" value="1"/>
</dbReference>
<dbReference type="PRINTS" id="PR00298">
    <property type="entry name" value="CHAPERONIN60"/>
</dbReference>
<dbReference type="SUPFAM" id="SSF52029">
    <property type="entry name" value="GroEL apical domain-like"/>
    <property type="match status" value="1"/>
</dbReference>
<dbReference type="SUPFAM" id="SSF48592">
    <property type="entry name" value="GroEL equatorial domain-like"/>
    <property type="match status" value="1"/>
</dbReference>
<dbReference type="SUPFAM" id="SSF54849">
    <property type="entry name" value="GroEL-intermediate domain like"/>
    <property type="match status" value="1"/>
</dbReference>
<dbReference type="PROSITE" id="PS00296">
    <property type="entry name" value="CHAPERONINS_CPN60"/>
    <property type="match status" value="1"/>
</dbReference>
<sequence length="547" mass="57299">MAAKDVVFGDAARAKMVEGVNILANAVKVTLGPKGRNVVLERSFGGPTVTKDGVSVAKEIELKDKLQNMGAQMVKEVASKTSDNAGDGTTTATVLAQSIVREGMKFVAAGMNPMDLKRGIDKAVGAAVEELKKISKPTTTSKEIAQVGAISANSDASIGERIAEAMDKVGKEGVITVEDGKSLADELEVVEGMQFDRGYLSPYFINNPEKQVVALDNPFVLLFDKKISNIRDLLPVLEQVAKAGRPLLIIAEDVEGEALATLVVNNIRGILKTAAVKAPGFGDRRKAMLEDIAILTGGTVIAEEVGLTLEKATLNDLGQAKRIEIGKENTIIIDGAGDAAGIEGRVKQIRAQIEEATSDYDREKLQERVAKLAGGVAVIKVGAATEVEMKEKKARVEDALHATRAAVEEGIVPGGGVALLRARAAISALQGDNADQNAGIKIVLRAMEEPLRQIVLNAGEEASVVVAKVIEGKGNYGYNAASGEYGDLVEMGVLDPTKVTRTALQNAASVASLMLTTDCAVAETPKEESAPAMPGGMGGMGGMEGMM</sequence>
<gene>
    <name evidence="1" type="primary">groEL</name>
    <name evidence="1" type="synonym">groL</name>
    <name type="ordered locus">RALTA_A0686</name>
</gene>
<evidence type="ECO:0000255" key="1">
    <source>
        <dbReference type="HAMAP-Rule" id="MF_00600"/>
    </source>
</evidence>
<name>CH60_CUPTR</name>
<accession>B3R2Y3</accession>
<feature type="chain" id="PRO_1000129999" description="Chaperonin GroEL">
    <location>
        <begin position="1"/>
        <end position="547"/>
    </location>
</feature>
<feature type="binding site" evidence="1">
    <location>
        <begin position="30"/>
        <end position="33"/>
    </location>
    <ligand>
        <name>ATP</name>
        <dbReference type="ChEBI" id="CHEBI:30616"/>
    </ligand>
</feature>
<feature type="binding site" evidence="1">
    <location>
        <position position="51"/>
    </location>
    <ligand>
        <name>ATP</name>
        <dbReference type="ChEBI" id="CHEBI:30616"/>
    </ligand>
</feature>
<feature type="binding site" evidence="1">
    <location>
        <begin position="87"/>
        <end position="91"/>
    </location>
    <ligand>
        <name>ATP</name>
        <dbReference type="ChEBI" id="CHEBI:30616"/>
    </ligand>
</feature>
<feature type="binding site" evidence="1">
    <location>
        <position position="415"/>
    </location>
    <ligand>
        <name>ATP</name>
        <dbReference type="ChEBI" id="CHEBI:30616"/>
    </ligand>
</feature>
<feature type="binding site" evidence="1">
    <location>
        <begin position="479"/>
        <end position="481"/>
    </location>
    <ligand>
        <name>ATP</name>
        <dbReference type="ChEBI" id="CHEBI:30616"/>
    </ligand>
</feature>
<feature type="binding site" evidence="1">
    <location>
        <position position="495"/>
    </location>
    <ligand>
        <name>ATP</name>
        <dbReference type="ChEBI" id="CHEBI:30616"/>
    </ligand>
</feature>
<organism>
    <name type="scientific">Cupriavidus taiwanensis (strain DSM 17343 / BCRC 17206 / CCUG 44338 / CIP 107171 / LMG 19424 / R1)</name>
    <name type="common">Ralstonia taiwanensis (strain LMG 19424)</name>
    <dbReference type="NCBI Taxonomy" id="977880"/>
    <lineage>
        <taxon>Bacteria</taxon>
        <taxon>Pseudomonadati</taxon>
        <taxon>Pseudomonadota</taxon>
        <taxon>Betaproteobacteria</taxon>
        <taxon>Burkholderiales</taxon>
        <taxon>Burkholderiaceae</taxon>
        <taxon>Cupriavidus</taxon>
    </lineage>
</organism>